<accession>P9WG74</accession>
<accession>L0T3H3</accession>
<accession>P66916</accession>
<accession>P96260</accession>
<dbReference type="EC" id="2.5.1.3"/>
<dbReference type="EMBL" id="AE000516">
    <property type="protein sequence ID" value="AAK44651.1"/>
    <property type="molecule type" value="Genomic_DNA"/>
</dbReference>
<dbReference type="PIR" id="D70629">
    <property type="entry name" value="D70629"/>
</dbReference>
<dbReference type="RefSeq" id="WP_003402115.1">
    <property type="nucleotide sequence ID" value="NZ_KK341227.1"/>
</dbReference>
<dbReference type="SMR" id="P9WG74"/>
<dbReference type="KEGG" id="mtc:MT0427"/>
<dbReference type="PATRIC" id="fig|83331.31.peg.456"/>
<dbReference type="HOGENOM" id="CLU_018272_3_0_11"/>
<dbReference type="UniPathway" id="UPA00060">
    <property type="reaction ID" value="UER00141"/>
</dbReference>
<dbReference type="Proteomes" id="UP000001020">
    <property type="component" value="Chromosome"/>
</dbReference>
<dbReference type="GO" id="GO:0005737">
    <property type="term" value="C:cytoplasm"/>
    <property type="evidence" value="ECO:0007669"/>
    <property type="project" value="TreeGrafter"/>
</dbReference>
<dbReference type="GO" id="GO:0000287">
    <property type="term" value="F:magnesium ion binding"/>
    <property type="evidence" value="ECO:0007669"/>
    <property type="project" value="UniProtKB-UniRule"/>
</dbReference>
<dbReference type="GO" id="GO:0004789">
    <property type="term" value="F:thiamine-phosphate diphosphorylase activity"/>
    <property type="evidence" value="ECO:0007669"/>
    <property type="project" value="UniProtKB-UniRule"/>
</dbReference>
<dbReference type="GO" id="GO:0009228">
    <property type="term" value="P:thiamine biosynthetic process"/>
    <property type="evidence" value="ECO:0007669"/>
    <property type="project" value="UniProtKB-KW"/>
</dbReference>
<dbReference type="GO" id="GO:0009229">
    <property type="term" value="P:thiamine diphosphate biosynthetic process"/>
    <property type="evidence" value="ECO:0007669"/>
    <property type="project" value="UniProtKB-UniRule"/>
</dbReference>
<dbReference type="CDD" id="cd00564">
    <property type="entry name" value="TMP_TenI"/>
    <property type="match status" value="1"/>
</dbReference>
<dbReference type="FunFam" id="3.20.20.70:FF:000178">
    <property type="entry name" value="Thiamine-phosphate synthase"/>
    <property type="match status" value="1"/>
</dbReference>
<dbReference type="Gene3D" id="3.20.20.70">
    <property type="entry name" value="Aldolase class I"/>
    <property type="match status" value="1"/>
</dbReference>
<dbReference type="HAMAP" id="MF_00097">
    <property type="entry name" value="TMP_synthase"/>
    <property type="match status" value="1"/>
</dbReference>
<dbReference type="InterPro" id="IPR013785">
    <property type="entry name" value="Aldolase_TIM"/>
</dbReference>
<dbReference type="InterPro" id="IPR036206">
    <property type="entry name" value="ThiamineP_synth_sf"/>
</dbReference>
<dbReference type="InterPro" id="IPR022998">
    <property type="entry name" value="ThiamineP_synth_TenI"/>
</dbReference>
<dbReference type="InterPro" id="IPR034291">
    <property type="entry name" value="TMP_synthase"/>
</dbReference>
<dbReference type="NCBIfam" id="TIGR00693">
    <property type="entry name" value="thiE"/>
    <property type="match status" value="1"/>
</dbReference>
<dbReference type="PANTHER" id="PTHR20857">
    <property type="entry name" value="THIAMINE-PHOSPHATE PYROPHOSPHORYLASE"/>
    <property type="match status" value="1"/>
</dbReference>
<dbReference type="PANTHER" id="PTHR20857:SF15">
    <property type="entry name" value="THIAMINE-PHOSPHATE SYNTHASE"/>
    <property type="match status" value="1"/>
</dbReference>
<dbReference type="Pfam" id="PF02581">
    <property type="entry name" value="TMP-TENI"/>
    <property type="match status" value="1"/>
</dbReference>
<dbReference type="SUPFAM" id="SSF51391">
    <property type="entry name" value="Thiamin phosphate synthase"/>
    <property type="match status" value="1"/>
</dbReference>
<proteinExistence type="inferred from homology"/>
<feature type="chain" id="PRO_0000428411" description="Thiamine-phosphate synthase">
    <location>
        <begin position="1"/>
        <end position="222"/>
    </location>
</feature>
<feature type="binding site" evidence="1">
    <location>
        <begin position="40"/>
        <end position="44"/>
    </location>
    <ligand>
        <name>4-amino-2-methyl-5-(diphosphooxymethyl)pyrimidine</name>
        <dbReference type="ChEBI" id="CHEBI:57841"/>
    </ligand>
</feature>
<feature type="binding site" evidence="1">
    <location>
        <position position="81"/>
    </location>
    <ligand>
        <name>4-amino-2-methyl-5-(diphosphooxymethyl)pyrimidine</name>
        <dbReference type="ChEBI" id="CHEBI:57841"/>
    </ligand>
</feature>
<feature type="binding site" evidence="1">
    <location>
        <position position="82"/>
    </location>
    <ligand>
        <name>Mg(2+)</name>
        <dbReference type="ChEBI" id="CHEBI:18420"/>
    </ligand>
</feature>
<feature type="binding site" evidence="1">
    <location>
        <position position="101"/>
    </location>
    <ligand>
        <name>Mg(2+)</name>
        <dbReference type="ChEBI" id="CHEBI:18420"/>
    </ligand>
</feature>
<feature type="binding site" evidence="1">
    <location>
        <position position="120"/>
    </location>
    <ligand>
        <name>4-amino-2-methyl-5-(diphosphooxymethyl)pyrimidine</name>
        <dbReference type="ChEBI" id="CHEBI:57841"/>
    </ligand>
</feature>
<feature type="binding site" evidence="1">
    <location>
        <begin position="146"/>
        <end position="148"/>
    </location>
    <ligand>
        <name>2-[(2R,5Z)-2-carboxy-4-methylthiazol-5(2H)-ylidene]ethyl phosphate</name>
        <dbReference type="ChEBI" id="CHEBI:62899"/>
    </ligand>
</feature>
<feature type="binding site" evidence="1">
    <location>
        <position position="149"/>
    </location>
    <ligand>
        <name>4-amino-2-methyl-5-(diphosphooxymethyl)pyrimidine</name>
        <dbReference type="ChEBI" id="CHEBI:57841"/>
    </ligand>
</feature>
<feature type="binding site" evidence="1">
    <location>
        <position position="178"/>
    </location>
    <ligand>
        <name>2-[(2R,5Z)-2-carboxy-4-methylthiazol-5(2H)-ylidene]ethyl phosphate</name>
        <dbReference type="ChEBI" id="CHEBI:62899"/>
    </ligand>
</feature>
<gene>
    <name type="primary">thiE</name>
    <name type="ordered locus">MT0427</name>
</gene>
<comment type="function">
    <text evidence="1">Condenses 4-methyl-5-(beta-hydroxyethyl)thiazole monophosphate (THZ-P) and 2-methyl-4-amino-5-hydroxymethyl pyrimidine pyrophosphate (HMP-PP) to form thiamine monophosphate (TMP).</text>
</comment>
<comment type="catalytic activity">
    <reaction>
        <text>2-[(2R,5Z)-2-carboxy-4-methylthiazol-5(2H)-ylidene]ethyl phosphate + 4-amino-2-methyl-5-(diphosphooxymethyl)pyrimidine + 2 H(+) = thiamine phosphate + CO2 + diphosphate</text>
        <dbReference type="Rhea" id="RHEA:47844"/>
        <dbReference type="ChEBI" id="CHEBI:15378"/>
        <dbReference type="ChEBI" id="CHEBI:16526"/>
        <dbReference type="ChEBI" id="CHEBI:33019"/>
        <dbReference type="ChEBI" id="CHEBI:37575"/>
        <dbReference type="ChEBI" id="CHEBI:57841"/>
        <dbReference type="ChEBI" id="CHEBI:62899"/>
        <dbReference type="EC" id="2.5.1.3"/>
    </reaction>
</comment>
<comment type="catalytic activity">
    <reaction>
        <text>2-(2-carboxy-4-methylthiazol-5-yl)ethyl phosphate + 4-amino-2-methyl-5-(diphosphooxymethyl)pyrimidine + 2 H(+) = thiamine phosphate + CO2 + diphosphate</text>
        <dbReference type="Rhea" id="RHEA:47848"/>
        <dbReference type="ChEBI" id="CHEBI:15378"/>
        <dbReference type="ChEBI" id="CHEBI:16526"/>
        <dbReference type="ChEBI" id="CHEBI:33019"/>
        <dbReference type="ChEBI" id="CHEBI:37575"/>
        <dbReference type="ChEBI" id="CHEBI:57841"/>
        <dbReference type="ChEBI" id="CHEBI:62890"/>
        <dbReference type="EC" id="2.5.1.3"/>
    </reaction>
</comment>
<comment type="catalytic activity">
    <reaction>
        <text>4-methyl-5-(2-phosphooxyethyl)-thiazole + 4-amino-2-methyl-5-(diphosphooxymethyl)pyrimidine + H(+) = thiamine phosphate + diphosphate</text>
        <dbReference type="Rhea" id="RHEA:22328"/>
        <dbReference type="ChEBI" id="CHEBI:15378"/>
        <dbReference type="ChEBI" id="CHEBI:33019"/>
        <dbReference type="ChEBI" id="CHEBI:37575"/>
        <dbReference type="ChEBI" id="CHEBI:57841"/>
        <dbReference type="ChEBI" id="CHEBI:58296"/>
        <dbReference type="EC" id="2.5.1.3"/>
    </reaction>
</comment>
<comment type="cofactor">
    <cofactor evidence="1">
        <name>Mg(2+)</name>
        <dbReference type="ChEBI" id="CHEBI:18420"/>
    </cofactor>
    <text evidence="1">Binds 1 Mg(2+) ion per subunit.</text>
</comment>
<comment type="pathway">
    <text>Cofactor biosynthesis; thiamine diphosphate biosynthesis; thiamine phosphate from 4-amino-2-methyl-5-diphosphomethylpyrimidine and 4-methyl-5-(2-phosphoethyl)-thiazole: step 1/1.</text>
</comment>
<comment type="similarity">
    <text evidence="2">Belongs to the thiamine-phosphate synthase family.</text>
</comment>
<protein>
    <recommendedName>
        <fullName>Thiamine-phosphate synthase</fullName>
        <shortName>TP synthase</shortName>
        <shortName>TPS</shortName>
        <ecNumber>2.5.1.3</ecNumber>
    </recommendedName>
    <alternativeName>
        <fullName>Thiamine-phosphate pyrophosphorylase</fullName>
        <shortName>TMP pyrophosphorylase</shortName>
        <shortName>TMP-PPase</shortName>
    </alternativeName>
</protein>
<name>THIE_MYCTO</name>
<keyword id="KW-0460">Magnesium</keyword>
<keyword id="KW-0479">Metal-binding</keyword>
<keyword id="KW-1185">Reference proteome</keyword>
<keyword id="KW-0784">Thiamine biosynthesis</keyword>
<keyword id="KW-0808">Transferase</keyword>
<sequence length="222" mass="23271">MHESRLASARLYLCTDARRERGDLAQFAEAALAGGVDIIQLRDKGSPGELRFGPLQARDELAACEILADAAHRYGALFAVNDRADIARAAGADVLHLGQRDLPVNVARQILAPDTLIGRSTHDPDQVAAAAAGDADYFCVGPCWPTPTKPGRAAPGLGLVRVAAELGGDDKPWFAIGGINAQRLPAVLDAGARRIVVVRAITSADDPRAAAEQLRSALTAAN</sequence>
<evidence type="ECO:0000250" key="1"/>
<evidence type="ECO:0000305" key="2"/>
<organism>
    <name type="scientific">Mycobacterium tuberculosis (strain CDC 1551 / Oshkosh)</name>
    <dbReference type="NCBI Taxonomy" id="83331"/>
    <lineage>
        <taxon>Bacteria</taxon>
        <taxon>Bacillati</taxon>
        <taxon>Actinomycetota</taxon>
        <taxon>Actinomycetes</taxon>
        <taxon>Mycobacteriales</taxon>
        <taxon>Mycobacteriaceae</taxon>
        <taxon>Mycobacterium</taxon>
        <taxon>Mycobacterium tuberculosis complex</taxon>
    </lineage>
</organism>
<reference key="1">
    <citation type="journal article" date="2002" name="J. Bacteriol.">
        <title>Whole-genome comparison of Mycobacterium tuberculosis clinical and laboratory strains.</title>
        <authorList>
            <person name="Fleischmann R.D."/>
            <person name="Alland D."/>
            <person name="Eisen J.A."/>
            <person name="Carpenter L."/>
            <person name="White O."/>
            <person name="Peterson J.D."/>
            <person name="DeBoy R.T."/>
            <person name="Dodson R.J."/>
            <person name="Gwinn M.L."/>
            <person name="Haft D.H."/>
            <person name="Hickey E.K."/>
            <person name="Kolonay J.F."/>
            <person name="Nelson W.C."/>
            <person name="Umayam L.A."/>
            <person name="Ermolaeva M.D."/>
            <person name="Salzberg S.L."/>
            <person name="Delcher A."/>
            <person name="Utterback T.R."/>
            <person name="Weidman J.F."/>
            <person name="Khouri H.M."/>
            <person name="Gill J."/>
            <person name="Mikula A."/>
            <person name="Bishai W."/>
            <person name="Jacobs W.R. Jr."/>
            <person name="Venter J.C."/>
            <person name="Fraser C.M."/>
        </authorList>
    </citation>
    <scope>NUCLEOTIDE SEQUENCE [LARGE SCALE GENOMIC DNA]</scope>
    <source>
        <strain>CDC 1551 / Oshkosh</strain>
    </source>
</reference>